<protein>
    <recommendedName>
        <fullName evidence="1">Undecaprenyl-diphosphatase</fullName>
        <ecNumber evidence="1">3.6.1.27</ecNumber>
    </recommendedName>
    <alternativeName>
        <fullName evidence="1">Bacitracin resistance protein</fullName>
    </alternativeName>
    <alternativeName>
        <fullName evidence="1">Undecaprenyl pyrophosphate phosphatase</fullName>
    </alternativeName>
</protein>
<dbReference type="EC" id="3.6.1.27" evidence="1"/>
<dbReference type="EMBL" id="CR626927">
    <property type="protein sequence ID" value="CAH05846.1"/>
    <property type="molecule type" value="Genomic_DNA"/>
</dbReference>
<dbReference type="RefSeq" id="WP_005797037.1">
    <property type="nucleotide sequence ID" value="NZ_UFTH01000001.1"/>
</dbReference>
<dbReference type="SMR" id="Q5LJ30"/>
<dbReference type="PaxDb" id="272559-BF9343_0067"/>
<dbReference type="KEGG" id="bfs:BF9343_0067"/>
<dbReference type="eggNOG" id="COG1968">
    <property type="taxonomic scope" value="Bacteria"/>
</dbReference>
<dbReference type="HOGENOM" id="CLU_060296_1_2_10"/>
<dbReference type="Proteomes" id="UP000006731">
    <property type="component" value="Chromosome"/>
</dbReference>
<dbReference type="GO" id="GO:0005886">
    <property type="term" value="C:plasma membrane"/>
    <property type="evidence" value="ECO:0007669"/>
    <property type="project" value="UniProtKB-SubCell"/>
</dbReference>
<dbReference type="GO" id="GO:0050380">
    <property type="term" value="F:undecaprenyl-diphosphatase activity"/>
    <property type="evidence" value="ECO:0007669"/>
    <property type="project" value="UniProtKB-UniRule"/>
</dbReference>
<dbReference type="GO" id="GO:0071555">
    <property type="term" value="P:cell wall organization"/>
    <property type="evidence" value="ECO:0007669"/>
    <property type="project" value="UniProtKB-KW"/>
</dbReference>
<dbReference type="GO" id="GO:0009252">
    <property type="term" value="P:peptidoglycan biosynthetic process"/>
    <property type="evidence" value="ECO:0007669"/>
    <property type="project" value="UniProtKB-KW"/>
</dbReference>
<dbReference type="GO" id="GO:0008360">
    <property type="term" value="P:regulation of cell shape"/>
    <property type="evidence" value="ECO:0007669"/>
    <property type="project" value="UniProtKB-KW"/>
</dbReference>
<dbReference type="GO" id="GO:0046677">
    <property type="term" value="P:response to antibiotic"/>
    <property type="evidence" value="ECO:0007669"/>
    <property type="project" value="UniProtKB-UniRule"/>
</dbReference>
<dbReference type="HAMAP" id="MF_01006">
    <property type="entry name" value="Undec_diphosphatase"/>
    <property type="match status" value="1"/>
</dbReference>
<dbReference type="InterPro" id="IPR003824">
    <property type="entry name" value="UppP"/>
</dbReference>
<dbReference type="PANTHER" id="PTHR30622">
    <property type="entry name" value="UNDECAPRENYL-DIPHOSPHATASE"/>
    <property type="match status" value="1"/>
</dbReference>
<dbReference type="PANTHER" id="PTHR30622:SF2">
    <property type="entry name" value="UNDECAPRENYL-DIPHOSPHATASE"/>
    <property type="match status" value="1"/>
</dbReference>
<dbReference type="Pfam" id="PF02673">
    <property type="entry name" value="BacA"/>
    <property type="match status" value="1"/>
</dbReference>
<comment type="function">
    <text evidence="1">Catalyzes the dephosphorylation of undecaprenyl diphosphate (UPP). Confers resistance to bacitracin.</text>
</comment>
<comment type="catalytic activity">
    <reaction evidence="1">
        <text>di-trans,octa-cis-undecaprenyl diphosphate + H2O = di-trans,octa-cis-undecaprenyl phosphate + phosphate + H(+)</text>
        <dbReference type="Rhea" id="RHEA:28094"/>
        <dbReference type="ChEBI" id="CHEBI:15377"/>
        <dbReference type="ChEBI" id="CHEBI:15378"/>
        <dbReference type="ChEBI" id="CHEBI:43474"/>
        <dbReference type="ChEBI" id="CHEBI:58405"/>
        <dbReference type="ChEBI" id="CHEBI:60392"/>
        <dbReference type="EC" id="3.6.1.27"/>
    </reaction>
</comment>
<comment type="subcellular location">
    <subcellularLocation>
        <location evidence="1">Cell inner membrane</location>
        <topology evidence="1">Multi-pass membrane protein</topology>
    </subcellularLocation>
</comment>
<comment type="miscellaneous">
    <text>Bacitracin is thought to be involved in the inhibition of peptidoglycan synthesis by sequestering undecaprenyl diphosphate, thereby reducing the pool of lipid carrier available.</text>
</comment>
<comment type="similarity">
    <text evidence="1">Belongs to the UppP family.</text>
</comment>
<gene>
    <name evidence="1" type="primary">uppP</name>
    <name type="ordered locus">BF0068</name>
</gene>
<keyword id="KW-0046">Antibiotic resistance</keyword>
<keyword id="KW-0997">Cell inner membrane</keyword>
<keyword id="KW-1003">Cell membrane</keyword>
<keyword id="KW-0133">Cell shape</keyword>
<keyword id="KW-0961">Cell wall biogenesis/degradation</keyword>
<keyword id="KW-0378">Hydrolase</keyword>
<keyword id="KW-0472">Membrane</keyword>
<keyword id="KW-0573">Peptidoglycan synthesis</keyword>
<keyword id="KW-0812">Transmembrane</keyword>
<keyword id="KW-1133">Transmembrane helix</keyword>
<organism>
    <name type="scientific">Bacteroides fragilis (strain ATCC 25285 / DSM 2151 / CCUG 4856 / JCM 11019 / LMG 10263 / NCTC 9343 / Onslow / VPI 2553 / EN-2)</name>
    <dbReference type="NCBI Taxonomy" id="272559"/>
    <lineage>
        <taxon>Bacteria</taxon>
        <taxon>Pseudomonadati</taxon>
        <taxon>Bacteroidota</taxon>
        <taxon>Bacteroidia</taxon>
        <taxon>Bacteroidales</taxon>
        <taxon>Bacteroidaceae</taxon>
        <taxon>Bacteroides</taxon>
    </lineage>
</organism>
<reference key="1">
    <citation type="journal article" date="2005" name="Science">
        <title>Extensive DNA inversions in the B. fragilis genome control variable gene expression.</title>
        <authorList>
            <person name="Cerdeno-Tarraga A.-M."/>
            <person name="Patrick S."/>
            <person name="Crossman L.C."/>
            <person name="Blakely G."/>
            <person name="Abratt V."/>
            <person name="Lennard N."/>
            <person name="Poxton I."/>
            <person name="Duerden B."/>
            <person name="Harris B."/>
            <person name="Quail M.A."/>
            <person name="Barron A."/>
            <person name="Clark L."/>
            <person name="Corton C."/>
            <person name="Doggett J."/>
            <person name="Holden M.T.G."/>
            <person name="Larke N."/>
            <person name="Line A."/>
            <person name="Lord A."/>
            <person name="Norbertczak H."/>
            <person name="Ormond D."/>
            <person name="Price C."/>
            <person name="Rabbinowitsch E."/>
            <person name="Woodward J."/>
            <person name="Barrell B.G."/>
            <person name="Parkhill J."/>
        </authorList>
    </citation>
    <scope>NUCLEOTIDE SEQUENCE [LARGE SCALE GENOMIC DNA]</scope>
    <source>
        <strain>ATCC 25285 / DSM 2151 / CCUG 4856 / JCM 11019 / LMG 10263 / NCTC 9343 / Onslow / VPI 2553 / EN-2</strain>
    </source>
</reference>
<proteinExistence type="inferred from homology"/>
<feature type="chain" id="PRO_0000227605" description="Undecaprenyl-diphosphatase">
    <location>
        <begin position="1"/>
        <end position="266"/>
    </location>
</feature>
<feature type="transmembrane region" description="Helical" evidence="1">
    <location>
        <begin position="41"/>
        <end position="61"/>
    </location>
</feature>
<feature type="transmembrane region" description="Helical" evidence="1">
    <location>
        <begin position="82"/>
        <end position="102"/>
    </location>
</feature>
<feature type="transmembrane region" description="Helical" evidence="1">
    <location>
        <begin position="106"/>
        <end position="126"/>
    </location>
</feature>
<feature type="transmembrane region" description="Helical" evidence="1">
    <location>
        <begin position="140"/>
        <end position="160"/>
    </location>
</feature>
<feature type="transmembrane region" description="Helical" evidence="1">
    <location>
        <begin position="180"/>
        <end position="200"/>
    </location>
</feature>
<feature type="transmembrane region" description="Helical" evidence="1">
    <location>
        <begin position="213"/>
        <end position="233"/>
    </location>
</feature>
<feature type="transmembrane region" description="Helical" evidence="1">
    <location>
        <begin position="245"/>
        <end position="265"/>
    </location>
</feature>
<accession>Q5LJ30</accession>
<name>UPPP_BACFN</name>
<sequence>MEWFEALILGLIQGLTEYLPVSSSGHLAIGSALFGIEGEENLAFTIVVHVATVFSTLVILWKEIDWIFRGLFKFEMNSETRYVINILISMIPIGIVGVFFKDEVEAIFGSGLLIVGCMLLLTAALLSFSYYAKPRQKENISMKDAFIIGLAQACAVLPGLSRSGSTIATGLLLGDNKAKLAQFSFLMVIPPILGEALLDGMKMIKGEAIAGDIPTLSLIVGFIAAFVSGCLACKWMINIVKKGKLIYFAIYCAIVGVVTIVVSQLQ</sequence>
<evidence type="ECO:0000255" key="1">
    <source>
        <dbReference type="HAMAP-Rule" id="MF_01006"/>
    </source>
</evidence>